<accession>C3L034</accession>
<protein>
    <recommendedName>
        <fullName evidence="1">Pantothenate synthetase</fullName>
        <shortName evidence="1">PS</shortName>
        <ecNumber evidence="1">6.3.2.1</ecNumber>
    </recommendedName>
    <alternativeName>
        <fullName evidence="1">Pantoate--beta-alanine ligase</fullName>
    </alternativeName>
    <alternativeName>
        <fullName evidence="1">Pantoate-activating enzyme</fullName>
    </alternativeName>
</protein>
<organism>
    <name type="scientific">Clostridium botulinum (strain 657 / Type Ba4)</name>
    <dbReference type="NCBI Taxonomy" id="515621"/>
    <lineage>
        <taxon>Bacteria</taxon>
        <taxon>Bacillati</taxon>
        <taxon>Bacillota</taxon>
        <taxon>Clostridia</taxon>
        <taxon>Eubacteriales</taxon>
        <taxon>Clostridiaceae</taxon>
        <taxon>Clostridium</taxon>
    </lineage>
</organism>
<gene>
    <name evidence="1" type="primary">panC</name>
    <name type="ordered locus">CLJ_B0493</name>
</gene>
<sequence>MNIVNTIKDVKLIIKKWKDENLSIGYVPTMGYLHEGHASLIKKAREENDKVIVSIFVNPIQFGPKEDYSIYPRDLVKDSSLCEKFEVDLIFNPETSEMYPNKIYSHVNVDILTQNLCGEKRPGHFQGVCTVLTKFFNILNPTKAYFGEKDAQQLAVVKKMVEDLNFPIEIIGCPIIREEDGLAKSSRNAYLNKQERKSALILNKSLKEALNALESGEKNSNNIRDIIVSKLNKEPLAKIDYVSIVDSITLQSVEKIQSSILVAIAVYIGKTRLIDNFTFKL</sequence>
<reference key="1">
    <citation type="submission" date="2008-05" db="EMBL/GenBank/DDBJ databases">
        <title>Genome sequence of Clostridium botulinum Ba4 strain 657.</title>
        <authorList>
            <person name="Shrivastava S."/>
            <person name="Brown J.L."/>
            <person name="Bruce D."/>
            <person name="Detter C."/>
            <person name="Munk C."/>
            <person name="Smith L.A."/>
            <person name="Smith T.J."/>
            <person name="Sutton G."/>
            <person name="Brettin T.S."/>
        </authorList>
    </citation>
    <scope>NUCLEOTIDE SEQUENCE [LARGE SCALE GENOMIC DNA]</scope>
    <source>
        <strain>657 / Type Ba4</strain>
    </source>
</reference>
<evidence type="ECO:0000255" key="1">
    <source>
        <dbReference type="HAMAP-Rule" id="MF_00158"/>
    </source>
</evidence>
<comment type="function">
    <text evidence="1">Catalyzes the condensation of pantoate with beta-alanine in an ATP-dependent reaction via a pantoyl-adenylate intermediate.</text>
</comment>
<comment type="catalytic activity">
    <reaction evidence="1">
        <text>(R)-pantoate + beta-alanine + ATP = (R)-pantothenate + AMP + diphosphate + H(+)</text>
        <dbReference type="Rhea" id="RHEA:10912"/>
        <dbReference type="ChEBI" id="CHEBI:15378"/>
        <dbReference type="ChEBI" id="CHEBI:15980"/>
        <dbReference type="ChEBI" id="CHEBI:29032"/>
        <dbReference type="ChEBI" id="CHEBI:30616"/>
        <dbReference type="ChEBI" id="CHEBI:33019"/>
        <dbReference type="ChEBI" id="CHEBI:57966"/>
        <dbReference type="ChEBI" id="CHEBI:456215"/>
        <dbReference type="EC" id="6.3.2.1"/>
    </reaction>
</comment>
<comment type="pathway">
    <text evidence="1">Cofactor biosynthesis; (R)-pantothenate biosynthesis; (R)-pantothenate from (R)-pantoate and beta-alanine: step 1/1.</text>
</comment>
<comment type="subunit">
    <text evidence="1">Homodimer.</text>
</comment>
<comment type="subcellular location">
    <subcellularLocation>
        <location evidence="1">Cytoplasm</location>
    </subcellularLocation>
</comment>
<comment type="miscellaneous">
    <text evidence="1">The reaction proceeds by a bi uni uni bi ping pong mechanism.</text>
</comment>
<comment type="similarity">
    <text evidence="1">Belongs to the pantothenate synthetase family.</text>
</comment>
<proteinExistence type="inferred from homology"/>
<name>PANC_CLOB6</name>
<keyword id="KW-0067">ATP-binding</keyword>
<keyword id="KW-0963">Cytoplasm</keyword>
<keyword id="KW-0436">Ligase</keyword>
<keyword id="KW-0547">Nucleotide-binding</keyword>
<keyword id="KW-0566">Pantothenate biosynthesis</keyword>
<feature type="chain" id="PRO_1000203485" description="Pantothenate synthetase">
    <location>
        <begin position="1"/>
        <end position="281"/>
    </location>
</feature>
<feature type="active site" description="Proton donor" evidence="1">
    <location>
        <position position="37"/>
    </location>
</feature>
<feature type="binding site" evidence="1">
    <location>
        <begin position="30"/>
        <end position="37"/>
    </location>
    <ligand>
        <name>ATP</name>
        <dbReference type="ChEBI" id="CHEBI:30616"/>
    </ligand>
</feature>
<feature type="binding site" evidence="1">
    <location>
        <position position="61"/>
    </location>
    <ligand>
        <name>(R)-pantoate</name>
        <dbReference type="ChEBI" id="CHEBI:15980"/>
    </ligand>
</feature>
<feature type="binding site" evidence="1">
    <location>
        <position position="61"/>
    </location>
    <ligand>
        <name>beta-alanine</name>
        <dbReference type="ChEBI" id="CHEBI:57966"/>
    </ligand>
</feature>
<feature type="binding site" evidence="1">
    <location>
        <begin position="147"/>
        <end position="150"/>
    </location>
    <ligand>
        <name>ATP</name>
        <dbReference type="ChEBI" id="CHEBI:30616"/>
    </ligand>
</feature>
<feature type="binding site" evidence="1">
    <location>
        <position position="153"/>
    </location>
    <ligand>
        <name>(R)-pantoate</name>
        <dbReference type="ChEBI" id="CHEBI:15980"/>
    </ligand>
</feature>
<feature type="binding site" evidence="1">
    <location>
        <position position="176"/>
    </location>
    <ligand>
        <name>ATP</name>
        <dbReference type="ChEBI" id="CHEBI:30616"/>
    </ligand>
</feature>
<feature type="binding site" evidence="1">
    <location>
        <begin position="184"/>
        <end position="187"/>
    </location>
    <ligand>
        <name>ATP</name>
        <dbReference type="ChEBI" id="CHEBI:30616"/>
    </ligand>
</feature>
<dbReference type="EC" id="6.3.2.1" evidence="1"/>
<dbReference type="EMBL" id="CP001083">
    <property type="protein sequence ID" value="ACQ54633.1"/>
    <property type="molecule type" value="Genomic_DNA"/>
</dbReference>
<dbReference type="RefSeq" id="WP_003359636.1">
    <property type="nucleotide sequence ID" value="NC_012658.1"/>
</dbReference>
<dbReference type="SMR" id="C3L034"/>
<dbReference type="KEGG" id="cbi:CLJ_B0493"/>
<dbReference type="HOGENOM" id="CLU_047148_0_0_9"/>
<dbReference type="UniPathway" id="UPA00028">
    <property type="reaction ID" value="UER00005"/>
</dbReference>
<dbReference type="Proteomes" id="UP000002333">
    <property type="component" value="Chromosome"/>
</dbReference>
<dbReference type="GO" id="GO:0005829">
    <property type="term" value="C:cytosol"/>
    <property type="evidence" value="ECO:0007669"/>
    <property type="project" value="TreeGrafter"/>
</dbReference>
<dbReference type="GO" id="GO:0005524">
    <property type="term" value="F:ATP binding"/>
    <property type="evidence" value="ECO:0007669"/>
    <property type="project" value="UniProtKB-KW"/>
</dbReference>
<dbReference type="GO" id="GO:0004592">
    <property type="term" value="F:pantoate-beta-alanine ligase activity"/>
    <property type="evidence" value="ECO:0007669"/>
    <property type="project" value="UniProtKB-UniRule"/>
</dbReference>
<dbReference type="GO" id="GO:0015940">
    <property type="term" value="P:pantothenate biosynthetic process"/>
    <property type="evidence" value="ECO:0007669"/>
    <property type="project" value="UniProtKB-UniRule"/>
</dbReference>
<dbReference type="CDD" id="cd00560">
    <property type="entry name" value="PanC"/>
    <property type="match status" value="1"/>
</dbReference>
<dbReference type="FunFam" id="3.30.1300.10:FF:000001">
    <property type="entry name" value="Pantothenate synthetase"/>
    <property type="match status" value="1"/>
</dbReference>
<dbReference type="FunFam" id="3.40.50.620:FF:000013">
    <property type="entry name" value="Pantothenate synthetase"/>
    <property type="match status" value="1"/>
</dbReference>
<dbReference type="Gene3D" id="3.40.50.620">
    <property type="entry name" value="HUPs"/>
    <property type="match status" value="1"/>
</dbReference>
<dbReference type="Gene3D" id="3.30.1300.10">
    <property type="entry name" value="Pantoate-beta-alanine ligase, C-terminal domain"/>
    <property type="match status" value="1"/>
</dbReference>
<dbReference type="HAMAP" id="MF_00158">
    <property type="entry name" value="PanC"/>
    <property type="match status" value="1"/>
</dbReference>
<dbReference type="InterPro" id="IPR004821">
    <property type="entry name" value="Cyt_trans-like"/>
</dbReference>
<dbReference type="InterPro" id="IPR003721">
    <property type="entry name" value="Pantoate_ligase"/>
</dbReference>
<dbReference type="InterPro" id="IPR042176">
    <property type="entry name" value="Pantoate_ligase_C"/>
</dbReference>
<dbReference type="InterPro" id="IPR014729">
    <property type="entry name" value="Rossmann-like_a/b/a_fold"/>
</dbReference>
<dbReference type="NCBIfam" id="TIGR00125">
    <property type="entry name" value="cyt_tran_rel"/>
    <property type="match status" value="1"/>
</dbReference>
<dbReference type="NCBIfam" id="TIGR00018">
    <property type="entry name" value="panC"/>
    <property type="match status" value="1"/>
</dbReference>
<dbReference type="PANTHER" id="PTHR21299">
    <property type="entry name" value="CYTIDYLATE KINASE/PANTOATE-BETA-ALANINE LIGASE"/>
    <property type="match status" value="1"/>
</dbReference>
<dbReference type="PANTHER" id="PTHR21299:SF1">
    <property type="entry name" value="PANTOATE--BETA-ALANINE LIGASE"/>
    <property type="match status" value="1"/>
</dbReference>
<dbReference type="Pfam" id="PF02569">
    <property type="entry name" value="Pantoate_ligase"/>
    <property type="match status" value="1"/>
</dbReference>
<dbReference type="SUPFAM" id="SSF52374">
    <property type="entry name" value="Nucleotidylyl transferase"/>
    <property type="match status" value="1"/>
</dbReference>